<evidence type="ECO:0000250" key="1"/>
<evidence type="ECO:0000255" key="2">
    <source>
        <dbReference type="HAMAP-Rule" id="MF_00118"/>
    </source>
</evidence>
<keyword id="KW-0963">Cytoplasm</keyword>
<keyword id="KW-0251">Elongation factor</keyword>
<keyword id="KW-0342">GTP-binding</keyword>
<keyword id="KW-0378">Hydrolase</keyword>
<keyword id="KW-0460">Magnesium</keyword>
<keyword id="KW-0479">Metal-binding</keyword>
<keyword id="KW-0547">Nucleotide-binding</keyword>
<keyword id="KW-0648">Protein biosynthesis</keyword>
<keyword id="KW-1185">Reference proteome</keyword>
<feature type="chain" id="PRO_1000201392" description="Elongation factor Tu">
    <location>
        <begin position="1"/>
        <end position="396"/>
    </location>
</feature>
<feature type="domain" description="tr-type G">
    <location>
        <begin position="10"/>
        <end position="205"/>
    </location>
</feature>
<feature type="region of interest" description="G1" evidence="1">
    <location>
        <begin position="19"/>
        <end position="26"/>
    </location>
</feature>
<feature type="region of interest" description="G2" evidence="1">
    <location>
        <begin position="60"/>
        <end position="64"/>
    </location>
</feature>
<feature type="region of interest" description="G3" evidence="1">
    <location>
        <begin position="81"/>
        <end position="84"/>
    </location>
</feature>
<feature type="region of interest" description="G4" evidence="1">
    <location>
        <begin position="136"/>
        <end position="139"/>
    </location>
</feature>
<feature type="region of interest" description="G5" evidence="1">
    <location>
        <begin position="174"/>
        <end position="176"/>
    </location>
</feature>
<feature type="binding site" evidence="2">
    <location>
        <begin position="19"/>
        <end position="26"/>
    </location>
    <ligand>
        <name>GTP</name>
        <dbReference type="ChEBI" id="CHEBI:37565"/>
    </ligand>
</feature>
<feature type="binding site" evidence="2">
    <location>
        <position position="26"/>
    </location>
    <ligand>
        <name>Mg(2+)</name>
        <dbReference type="ChEBI" id="CHEBI:18420"/>
    </ligand>
</feature>
<feature type="binding site" evidence="2">
    <location>
        <begin position="81"/>
        <end position="85"/>
    </location>
    <ligand>
        <name>GTP</name>
        <dbReference type="ChEBI" id="CHEBI:37565"/>
    </ligand>
</feature>
<feature type="binding site" evidence="2">
    <location>
        <begin position="136"/>
        <end position="139"/>
    </location>
    <ligand>
        <name>GTP</name>
        <dbReference type="ChEBI" id="CHEBI:37565"/>
    </ligand>
</feature>
<sequence length="396" mass="43257">MAKAKFERNKPHVNIGTIGHVDHGKTTLTAAITTVLAQTGQAQAMNYASIDAAPEEKERGITINTAHVEYETENRHYAHVDCPGHADYVKNMITGAAQMDGAILVVSAADGPMPQTREHILLSKQVGVPYIVVFMNKCDMVDDEELLELVEMEIRDLLSQYEFPGDDTPVIKGSAKEALDNPTGEWAKKIGELMEAVDSYIPTPERATDKPFLMPVEDVFTITGRGTVATGRVERGIVKVGDQVEIIGLAEETKNTTVTGVEMFRKLLDQAQAGDNIGALLRGVDRNDIERGQCLAKPGSVKPYTKFKAEVYVLSKEEGGRHTPFFANYRPQFYFRTTDVTGIIQLPEGVEMIMPGDNTEFTVELIAPVAMEQGTRFAIREGGRTVGAGVVASIDA</sequence>
<comment type="function">
    <text evidence="2">GTP hydrolase that promotes the GTP-dependent binding of aminoacyl-tRNA to the A-site of ribosomes during protein biosynthesis.</text>
</comment>
<comment type="catalytic activity">
    <reaction evidence="2">
        <text>GTP + H2O = GDP + phosphate + H(+)</text>
        <dbReference type="Rhea" id="RHEA:19669"/>
        <dbReference type="ChEBI" id="CHEBI:15377"/>
        <dbReference type="ChEBI" id="CHEBI:15378"/>
        <dbReference type="ChEBI" id="CHEBI:37565"/>
        <dbReference type="ChEBI" id="CHEBI:43474"/>
        <dbReference type="ChEBI" id="CHEBI:58189"/>
        <dbReference type="EC" id="3.6.5.3"/>
    </reaction>
    <physiologicalReaction direction="left-to-right" evidence="2">
        <dbReference type="Rhea" id="RHEA:19670"/>
    </physiologicalReaction>
</comment>
<comment type="subunit">
    <text evidence="2">Monomer.</text>
</comment>
<comment type="subcellular location">
    <subcellularLocation>
        <location evidence="2">Cytoplasm</location>
    </subcellularLocation>
</comment>
<comment type="similarity">
    <text evidence="2">Belongs to the TRAFAC class translation factor GTPase superfamily. Classic translation factor GTPase family. EF-Tu/EF-1A subfamily.</text>
</comment>
<organism>
    <name type="scientific">Brevibacillus brevis (strain 47 / JCM 6285 / NBRC 100599)</name>
    <dbReference type="NCBI Taxonomy" id="358681"/>
    <lineage>
        <taxon>Bacteria</taxon>
        <taxon>Bacillati</taxon>
        <taxon>Bacillota</taxon>
        <taxon>Bacilli</taxon>
        <taxon>Bacillales</taxon>
        <taxon>Paenibacillaceae</taxon>
        <taxon>Brevibacillus</taxon>
    </lineage>
</organism>
<dbReference type="EC" id="3.6.5.3" evidence="2"/>
<dbReference type="EMBL" id="AP008955">
    <property type="protein sequence ID" value="BAH41194.1"/>
    <property type="molecule type" value="Genomic_DNA"/>
</dbReference>
<dbReference type="RefSeq" id="WP_012683980.1">
    <property type="nucleotide sequence ID" value="NC_012491.1"/>
</dbReference>
<dbReference type="SMR" id="C0ZIH6"/>
<dbReference type="STRING" id="358681.BBR47_02170"/>
<dbReference type="KEGG" id="bbe:BBR47_02170"/>
<dbReference type="eggNOG" id="COG0050">
    <property type="taxonomic scope" value="Bacteria"/>
</dbReference>
<dbReference type="HOGENOM" id="CLU_007265_0_1_9"/>
<dbReference type="Proteomes" id="UP000001877">
    <property type="component" value="Chromosome"/>
</dbReference>
<dbReference type="GO" id="GO:0005829">
    <property type="term" value="C:cytosol"/>
    <property type="evidence" value="ECO:0007669"/>
    <property type="project" value="TreeGrafter"/>
</dbReference>
<dbReference type="GO" id="GO:0005525">
    <property type="term" value="F:GTP binding"/>
    <property type="evidence" value="ECO:0007669"/>
    <property type="project" value="UniProtKB-UniRule"/>
</dbReference>
<dbReference type="GO" id="GO:0003924">
    <property type="term" value="F:GTPase activity"/>
    <property type="evidence" value="ECO:0007669"/>
    <property type="project" value="InterPro"/>
</dbReference>
<dbReference type="GO" id="GO:0003746">
    <property type="term" value="F:translation elongation factor activity"/>
    <property type="evidence" value="ECO:0007669"/>
    <property type="project" value="UniProtKB-UniRule"/>
</dbReference>
<dbReference type="CDD" id="cd01884">
    <property type="entry name" value="EF_Tu"/>
    <property type="match status" value="1"/>
</dbReference>
<dbReference type="CDD" id="cd03697">
    <property type="entry name" value="EFTU_II"/>
    <property type="match status" value="1"/>
</dbReference>
<dbReference type="CDD" id="cd03707">
    <property type="entry name" value="EFTU_III"/>
    <property type="match status" value="1"/>
</dbReference>
<dbReference type="FunFam" id="2.40.30.10:FF:000001">
    <property type="entry name" value="Elongation factor Tu"/>
    <property type="match status" value="1"/>
</dbReference>
<dbReference type="FunFam" id="3.40.50.300:FF:000003">
    <property type="entry name" value="Elongation factor Tu"/>
    <property type="match status" value="1"/>
</dbReference>
<dbReference type="Gene3D" id="3.40.50.300">
    <property type="entry name" value="P-loop containing nucleotide triphosphate hydrolases"/>
    <property type="match status" value="1"/>
</dbReference>
<dbReference type="Gene3D" id="2.40.30.10">
    <property type="entry name" value="Translation factors"/>
    <property type="match status" value="2"/>
</dbReference>
<dbReference type="HAMAP" id="MF_00118_B">
    <property type="entry name" value="EF_Tu_B"/>
    <property type="match status" value="1"/>
</dbReference>
<dbReference type="InterPro" id="IPR041709">
    <property type="entry name" value="EF-Tu_GTP-bd"/>
</dbReference>
<dbReference type="InterPro" id="IPR050055">
    <property type="entry name" value="EF-Tu_GTPase"/>
</dbReference>
<dbReference type="InterPro" id="IPR004161">
    <property type="entry name" value="EFTu-like_2"/>
</dbReference>
<dbReference type="InterPro" id="IPR033720">
    <property type="entry name" value="EFTU_2"/>
</dbReference>
<dbReference type="InterPro" id="IPR031157">
    <property type="entry name" value="G_TR_CS"/>
</dbReference>
<dbReference type="InterPro" id="IPR027417">
    <property type="entry name" value="P-loop_NTPase"/>
</dbReference>
<dbReference type="InterPro" id="IPR005225">
    <property type="entry name" value="Small_GTP-bd"/>
</dbReference>
<dbReference type="InterPro" id="IPR000795">
    <property type="entry name" value="T_Tr_GTP-bd_dom"/>
</dbReference>
<dbReference type="InterPro" id="IPR009000">
    <property type="entry name" value="Transl_B-barrel_sf"/>
</dbReference>
<dbReference type="InterPro" id="IPR009001">
    <property type="entry name" value="Transl_elong_EF1A/Init_IF2_C"/>
</dbReference>
<dbReference type="InterPro" id="IPR004541">
    <property type="entry name" value="Transl_elong_EFTu/EF1A_bac/org"/>
</dbReference>
<dbReference type="InterPro" id="IPR004160">
    <property type="entry name" value="Transl_elong_EFTu/EF1A_C"/>
</dbReference>
<dbReference type="NCBIfam" id="TIGR00485">
    <property type="entry name" value="EF-Tu"/>
    <property type="match status" value="1"/>
</dbReference>
<dbReference type="NCBIfam" id="NF000766">
    <property type="entry name" value="PRK00049.1"/>
    <property type="match status" value="1"/>
</dbReference>
<dbReference type="NCBIfam" id="NF009372">
    <property type="entry name" value="PRK12735.1"/>
    <property type="match status" value="1"/>
</dbReference>
<dbReference type="NCBIfam" id="NF009373">
    <property type="entry name" value="PRK12736.1"/>
    <property type="match status" value="1"/>
</dbReference>
<dbReference type="NCBIfam" id="TIGR00231">
    <property type="entry name" value="small_GTP"/>
    <property type="match status" value="1"/>
</dbReference>
<dbReference type="PANTHER" id="PTHR43721:SF22">
    <property type="entry name" value="ELONGATION FACTOR TU, MITOCHONDRIAL"/>
    <property type="match status" value="1"/>
</dbReference>
<dbReference type="PANTHER" id="PTHR43721">
    <property type="entry name" value="ELONGATION FACTOR TU-RELATED"/>
    <property type="match status" value="1"/>
</dbReference>
<dbReference type="Pfam" id="PF00009">
    <property type="entry name" value="GTP_EFTU"/>
    <property type="match status" value="1"/>
</dbReference>
<dbReference type="Pfam" id="PF03144">
    <property type="entry name" value="GTP_EFTU_D2"/>
    <property type="match status" value="1"/>
</dbReference>
<dbReference type="Pfam" id="PF03143">
    <property type="entry name" value="GTP_EFTU_D3"/>
    <property type="match status" value="1"/>
</dbReference>
<dbReference type="PRINTS" id="PR00315">
    <property type="entry name" value="ELONGATNFCT"/>
</dbReference>
<dbReference type="SUPFAM" id="SSF50465">
    <property type="entry name" value="EF-Tu/eEF-1alpha/eIF2-gamma C-terminal domain"/>
    <property type="match status" value="1"/>
</dbReference>
<dbReference type="SUPFAM" id="SSF52540">
    <property type="entry name" value="P-loop containing nucleoside triphosphate hydrolases"/>
    <property type="match status" value="1"/>
</dbReference>
<dbReference type="SUPFAM" id="SSF50447">
    <property type="entry name" value="Translation proteins"/>
    <property type="match status" value="1"/>
</dbReference>
<dbReference type="PROSITE" id="PS00301">
    <property type="entry name" value="G_TR_1"/>
    <property type="match status" value="1"/>
</dbReference>
<dbReference type="PROSITE" id="PS51722">
    <property type="entry name" value="G_TR_2"/>
    <property type="match status" value="1"/>
</dbReference>
<protein>
    <recommendedName>
        <fullName evidence="2">Elongation factor Tu</fullName>
        <shortName evidence="2">EF-Tu</shortName>
        <ecNumber evidence="2">3.6.5.3</ecNumber>
    </recommendedName>
</protein>
<accession>C0ZIH6</accession>
<proteinExistence type="inferred from homology"/>
<name>EFTU_BREBN</name>
<reference key="1">
    <citation type="submission" date="2005-03" db="EMBL/GenBank/DDBJ databases">
        <title>Brevibacillus brevis strain 47, complete genome.</title>
        <authorList>
            <person name="Hosoyama A."/>
            <person name="Yamada R."/>
            <person name="Hongo Y."/>
            <person name="Terui Y."/>
            <person name="Ankai A."/>
            <person name="Masuyama W."/>
            <person name="Sekiguchi M."/>
            <person name="Takeda T."/>
            <person name="Asano K."/>
            <person name="Ohji S."/>
            <person name="Ichikawa N."/>
            <person name="Narita S."/>
            <person name="Aoki N."/>
            <person name="Miura H."/>
            <person name="Matsushita S."/>
            <person name="Sekigawa T."/>
            <person name="Yamagata H."/>
            <person name="Yoshikawa H."/>
            <person name="Udaka S."/>
            <person name="Tanikawa S."/>
            <person name="Fujita N."/>
        </authorList>
    </citation>
    <scope>NUCLEOTIDE SEQUENCE [LARGE SCALE GENOMIC DNA]</scope>
    <source>
        <strain>47 / JCM 6285 / NBRC 100599</strain>
    </source>
</reference>
<gene>
    <name evidence="2" type="primary">tuf</name>
    <name type="ordered locus">BBR47_02170</name>
</gene>